<sequence>MPRRRRIEPRKILPDPKFGSELLAKFINVLMVDGKKSIAESIVYNALETLAQRTGKDALESFEIALENVRPTVEVKSRRVGGSTYQVPVEVRPTRRNALGMRWIVEAARKRGDKSMALRLANELSDAVDNKGAAVKKREDVHRMAEANKAFAHFRW</sequence>
<keyword id="KW-1185">Reference proteome</keyword>
<keyword id="KW-0687">Ribonucleoprotein</keyword>
<keyword id="KW-0689">Ribosomal protein</keyword>
<keyword id="KW-0694">RNA-binding</keyword>
<keyword id="KW-0699">rRNA-binding</keyword>
<keyword id="KW-0820">tRNA-binding</keyword>
<accession>A6VL12</accession>
<organism>
    <name type="scientific">Actinobacillus succinogenes (strain ATCC 55618 / DSM 22257 / CCUG 43843 / 130Z)</name>
    <dbReference type="NCBI Taxonomy" id="339671"/>
    <lineage>
        <taxon>Bacteria</taxon>
        <taxon>Pseudomonadati</taxon>
        <taxon>Pseudomonadota</taxon>
        <taxon>Gammaproteobacteria</taxon>
        <taxon>Pasteurellales</taxon>
        <taxon>Pasteurellaceae</taxon>
        <taxon>Actinobacillus</taxon>
    </lineage>
</organism>
<proteinExistence type="inferred from homology"/>
<dbReference type="EMBL" id="CP000746">
    <property type="protein sequence ID" value="ABR73659.1"/>
    <property type="molecule type" value="Genomic_DNA"/>
</dbReference>
<dbReference type="RefSeq" id="WP_011978934.1">
    <property type="nucleotide sequence ID" value="NC_009655.1"/>
</dbReference>
<dbReference type="SMR" id="A6VL12"/>
<dbReference type="STRING" id="339671.Asuc_0281"/>
<dbReference type="KEGG" id="asu:Asuc_0281"/>
<dbReference type="eggNOG" id="COG0049">
    <property type="taxonomic scope" value="Bacteria"/>
</dbReference>
<dbReference type="HOGENOM" id="CLU_072226_1_1_6"/>
<dbReference type="OrthoDB" id="9807653at2"/>
<dbReference type="Proteomes" id="UP000001114">
    <property type="component" value="Chromosome"/>
</dbReference>
<dbReference type="GO" id="GO:0015935">
    <property type="term" value="C:small ribosomal subunit"/>
    <property type="evidence" value="ECO:0007669"/>
    <property type="project" value="InterPro"/>
</dbReference>
<dbReference type="GO" id="GO:0019843">
    <property type="term" value="F:rRNA binding"/>
    <property type="evidence" value="ECO:0007669"/>
    <property type="project" value="UniProtKB-UniRule"/>
</dbReference>
<dbReference type="GO" id="GO:0003735">
    <property type="term" value="F:structural constituent of ribosome"/>
    <property type="evidence" value="ECO:0007669"/>
    <property type="project" value="InterPro"/>
</dbReference>
<dbReference type="GO" id="GO:0000049">
    <property type="term" value="F:tRNA binding"/>
    <property type="evidence" value="ECO:0007669"/>
    <property type="project" value="UniProtKB-UniRule"/>
</dbReference>
<dbReference type="GO" id="GO:0006412">
    <property type="term" value="P:translation"/>
    <property type="evidence" value="ECO:0007669"/>
    <property type="project" value="UniProtKB-UniRule"/>
</dbReference>
<dbReference type="CDD" id="cd14869">
    <property type="entry name" value="uS7_Bacteria"/>
    <property type="match status" value="1"/>
</dbReference>
<dbReference type="FunFam" id="1.10.455.10:FF:000001">
    <property type="entry name" value="30S ribosomal protein S7"/>
    <property type="match status" value="1"/>
</dbReference>
<dbReference type="Gene3D" id="1.10.455.10">
    <property type="entry name" value="Ribosomal protein S7 domain"/>
    <property type="match status" value="1"/>
</dbReference>
<dbReference type="HAMAP" id="MF_00480_B">
    <property type="entry name" value="Ribosomal_uS7_B"/>
    <property type="match status" value="1"/>
</dbReference>
<dbReference type="InterPro" id="IPR000235">
    <property type="entry name" value="Ribosomal_uS7"/>
</dbReference>
<dbReference type="InterPro" id="IPR005717">
    <property type="entry name" value="Ribosomal_uS7_bac/org-type"/>
</dbReference>
<dbReference type="InterPro" id="IPR020606">
    <property type="entry name" value="Ribosomal_uS7_CS"/>
</dbReference>
<dbReference type="InterPro" id="IPR023798">
    <property type="entry name" value="Ribosomal_uS7_dom"/>
</dbReference>
<dbReference type="InterPro" id="IPR036823">
    <property type="entry name" value="Ribosomal_uS7_dom_sf"/>
</dbReference>
<dbReference type="NCBIfam" id="TIGR01029">
    <property type="entry name" value="rpsG_bact"/>
    <property type="match status" value="1"/>
</dbReference>
<dbReference type="PANTHER" id="PTHR11205">
    <property type="entry name" value="RIBOSOMAL PROTEIN S7"/>
    <property type="match status" value="1"/>
</dbReference>
<dbReference type="Pfam" id="PF00177">
    <property type="entry name" value="Ribosomal_S7"/>
    <property type="match status" value="1"/>
</dbReference>
<dbReference type="PIRSF" id="PIRSF002122">
    <property type="entry name" value="RPS7p_RPS7a_RPS5e_RPS7o"/>
    <property type="match status" value="1"/>
</dbReference>
<dbReference type="SUPFAM" id="SSF47973">
    <property type="entry name" value="Ribosomal protein S7"/>
    <property type="match status" value="1"/>
</dbReference>
<dbReference type="PROSITE" id="PS00052">
    <property type="entry name" value="RIBOSOMAL_S7"/>
    <property type="match status" value="1"/>
</dbReference>
<reference key="1">
    <citation type="journal article" date="2010" name="BMC Genomics">
        <title>A genomic perspective on the potential of Actinobacillus succinogenes for industrial succinate production.</title>
        <authorList>
            <person name="McKinlay J.B."/>
            <person name="Laivenieks M."/>
            <person name="Schindler B.D."/>
            <person name="McKinlay A.A."/>
            <person name="Siddaramappa S."/>
            <person name="Challacombe J.F."/>
            <person name="Lowry S.R."/>
            <person name="Clum A."/>
            <person name="Lapidus A.L."/>
            <person name="Burkhart K.B."/>
            <person name="Harkins V."/>
            <person name="Vieille C."/>
        </authorList>
    </citation>
    <scope>NUCLEOTIDE SEQUENCE [LARGE SCALE GENOMIC DNA]</scope>
    <source>
        <strain>ATCC 55618 / DSM 22257 / CCUG 43843 / 130Z</strain>
    </source>
</reference>
<evidence type="ECO:0000255" key="1">
    <source>
        <dbReference type="HAMAP-Rule" id="MF_00480"/>
    </source>
</evidence>
<evidence type="ECO:0000305" key="2"/>
<gene>
    <name evidence="1" type="primary">rpsG</name>
    <name type="ordered locus">Asuc_0281</name>
</gene>
<protein>
    <recommendedName>
        <fullName evidence="1">Small ribosomal subunit protein uS7</fullName>
    </recommendedName>
    <alternativeName>
        <fullName evidence="2">30S ribosomal protein S7</fullName>
    </alternativeName>
</protein>
<feature type="chain" id="PRO_1000072402" description="Small ribosomal subunit protein uS7">
    <location>
        <begin position="1"/>
        <end position="156"/>
    </location>
</feature>
<name>RS7_ACTSZ</name>
<comment type="function">
    <text evidence="1">One of the primary rRNA binding proteins, it binds directly to 16S rRNA where it nucleates assembly of the head domain of the 30S subunit. Is located at the subunit interface close to the decoding center, probably blocks exit of the E-site tRNA.</text>
</comment>
<comment type="subunit">
    <text evidence="1">Part of the 30S ribosomal subunit. Contacts proteins S9 and S11.</text>
</comment>
<comment type="similarity">
    <text evidence="1">Belongs to the universal ribosomal protein uS7 family.</text>
</comment>